<accession>A5DNX9</accession>
<gene>
    <name evidence="1" type="primary">TIF35</name>
    <name type="ORF">PGUG_04980</name>
</gene>
<organism>
    <name type="scientific">Meyerozyma guilliermondii (strain ATCC 6260 / CBS 566 / DSM 6381 / JCM 1539 / NBRC 10279 / NRRL Y-324)</name>
    <name type="common">Yeast</name>
    <name type="synonym">Candida guilliermondii</name>
    <dbReference type="NCBI Taxonomy" id="294746"/>
    <lineage>
        <taxon>Eukaryota</taxon>
        <taxon>Fungi</taxon>
        <taxon>Dikarya</taxon>
        <taxon>Ascomycota</taxon>
        <taxon>Saccharomycotina</taxon>
        <taxon>Pichiomycetes</taxon>
        <taxon>Debaryomycetaceae</taxon>
        <taxon>Meyerozyma</taxon>
    </lineage>
</organism>
<sequence length="274" mass="30908">MATSVIKSWADAEDEIPAAEVINNPDGTKTVINYRMNANGQKIRHIQKIREVKVKEKVHPLIAMRKNWSKYGKEKDMPAGPDARTTQLGEVVELKLGTSWKEIEKEEEEQKAEQTQQIVSNQRIKCRTCGGNHFTSKCPFKDTLISDSANTSAAATPEPDTDASGKYVPPSLRKGAGAVRDMSGRDRDDSTTLKISQLNTFVDEDMLRNELLKRFHPLQRVTIVRNRETGESRGFAYVSFVTERQAEEALNTLNGKGYHSLILHLEWPKKRKAN</sequence>
<reference key="1">
    <citation type="journal article" date="2009" name="Nature">
        <title>Evolution of pathogenicity and sexual reproduction in eight Candida genomes.</title>
        <authorList>
            <person name="Butler G."/>
            <person name="Rasmussen M.D."/>
            <person name="Lin M.F."/>
            <person name="Santos M.A.S."/>
            <person name="Sakthikumar S."/>
            <person name="Munro C.A."/>
            <person name="Rheinbay E."/>
            <person name="Grabherr M."/>
            <person name="Forche A."/>
            <person name="Reedy J.L."/>
            <person name="Agrafioti I."/>
            <person name="Arnaud M.B."/>
            <person name="Bates S."/>
            <person name="Brown A.J.P."/>
            <person name="Brunke S."/>
            <person name="Costanzo M.C."/>
            <person name="Fitzpatrick D.A."/>
            <person name="de Groot P.W.J."/>
            <person name="Harris D."/>
            <person name="Hoyer L.L."/>
            <person name="Hube B."/>
            <person name="Klis F.M."/>
            <person name="Kodira C."/>
            <person name="Lennard N."/>
            <person name="Logue M.E."/>
            <person name="Martin R."/>
            <person name="Neiman A.M."/>
            <person name="Nikolaou E."/>
            <person name="Quail M.A."/>
            <person name="Quinn J."/>
            <person name="Santos M.C."/>
            <person name="Schmitzberger F.F."/>
            <person name="Sherlock G."/>
            <person name="Shah P."/>
            <person name="Silverstein K.A.T."/>
            <person name="Skrzypek M.S."/>
            <person name="Soll D."/>
            <person name="Staggs R."/>
            <person name="Stansfield I."/>
            <person name="Stumpf M.P.H."/>
            <person name="Sudbery P.E."/>
            <person name="Srikantha T."/>
            <person name="Zeng Q."/>
            <person name="Berman J."/>
            <person name="Berriman M."/>
            <person name="Heitman J."/>
            <person name="Gow N.A.R."/>
            <person name="Lorenz M.C."/>
            <person name="Birren B.W."/>
            <person name="Kellis M."/>
            <person name="Cuomo C.A."/>
        </authorList>
    </citation>
    <scope>NUCLEOTIDE SEQUENCE [LARGE SCALE GENOMIC DNA]</scope>
    <source>
        <strain>ATCC 6260 / CBS 566 / DSM 6381 / JCM 1539 / NBRC 10279 / NRRL Y-324</strain>
    </source>
</reference>
<name>EIF3G_PICGU</name>
<protein>
    <recommendedName>
        <fullName evidence="1">Eukaryotic translation initiation factor 3 subunit G</fullName>
        <shortName evidence="1">eIF3g</shortName>
    </recommendedName>
    <alternativeName>
        <fullName evidence="1">Eukaryotic translation initiation factor 3 RNA-binding subunit</fullName>
        <shortName evidence="1">eIF-3 RNA-binding subunit</shortName>
    </alternativeName>
    <alternativeName>
        <fullName evidence="1">Translation initiation factor eIF3 p33 subunit homolog</fullName>
        <shortName evidence="1">eIF3 p33 homolog</shortName>
    </alternativeName>
</protein>
<keyword id="KW-0963">Cytoplasm</keyword>
<keyword id="KW-0396">Initiation factor</keyword>
<keyword id="KW-0597">Phosphoprotein</keyword>
<keyword id="KW-0648">Protein biosynthesis</keyword>
<keyword id="KW-1185">Reference proteome</keyword>
<keyword id="KW-0694">RNA-binding</keyword>
<comment type="function">
    <text evidence="1">RNA-binding component of the eukaryotic translation initiation factor 3 (eIF-3) complex, which is involved in protein synthesis of a specialized repertoire of mRNAs and, together with other initiation factors, stimulates binding of mRNA and methionyl-tRNAi to the 40S ribosome. The eIF-3 complex specifically targets and initiates translation of a subset of mRNAs involved in cell proliferation. This subunit can bind 18S rRNA.</text>
</comment>
<comment type="subunit">
    <text evidence="1">Component of the eukaryotic translation initiation factor 3 (eIF-3) complex.</text>
</comment>
<comment type="subcellular location">
    <subcellularLocation>
        <location evidence="1">Cytoplasm</location>
    </subcellularLocation>
</comment>
<comment type="similarity">
    <text evidence="1">Belongs to the eIF-3 subunit G family.</text>
</comment>
<evidence type="ECO:0000255" key="1">
    <source>
        <dbReference type="HAMAP-Rule" id="MF_03006"/>
    </source>
</evidence>
<evidence type="ECO:0000256" key="2">
    <source>
        <dbReference type="SAM" id="MobiDB-lite"/>
    </source>
</evidence>
<proteinExistence type="inferred from homology"/>
<dbReference type="EMBL" id="CH408160">
    <property type="protein sequence ID" value="EDK40882.1"/>
    <property type="molecule type" value="Genomic_DNA"/>
</dbReference>
<dbReference type="RefSeq" id="XP_001483025.1">
    <property type="nucleotide sequence ID" value="XM_001482975.1"/>
</dbReference>
<dbReference type="SMR" id="A5DNX9"/>
<dbReference type="FunCoup" id="A5DNX9">
    <property type="interactions" value="1067"/>
</dbReference>
<dbReference type="STRING" id="294746.A5DNX9"/>
<dbReference type="GeneID" id="5124807"/>
<dbReference type="KEGG" id="pgu:PGUG_04980"/>
<dbReference type="VEuPathDB" id="FungiDB:PGUG_04980"/>
<dbReference type="eggNOG" id="KOG0122">
    <property type="taxonomic scope" value="Eukaryota"/>
</dbReference>
<dbReference type="HOGENOM" id="CLU_034595_0_0_1"/>
<dbReference type="InParanoid" id="A5DNX9"/>
<dbReference type="OMA" id="ICQGDHF"/>
<dbReference type="OrthoDB" id="639027at2759"/>
<dbReference type="Proteomes" id="UP000001997">
    <property type="component" value="Unassembled WGS sequence"/>
</dbReference>
<dbReference type="GO" id="GO:0016282">
    <property type="term" value="C:eukaryotic 43S preinitiation complex"/>
    <property type="evidence" value="ECO:0007669"/>
    <property type="project" value="UniProtKB-UniRule"/>
</dbReference>
<dbReference type="GO" id="GO:0033290">
    <property type="term" value="C:eukaryotic 48S preinitiation complex"/>
    <property type="evidence" value="ECO:0007669"/>
    <property type="project" value="UniProtKB-UniRule"/>
</dbReference>
<dbReference type="GO" id="GO:0071540">
    <property type="term" value="C:eukaryotic translation initiation factor 3 complex, eIF3e"/>
    <property type="evidence" value="ECO:0007669"/>
    <property type="project" value="EnsemblFungi"/>
</dbReference>
<dbReference type="GO" id="GO:0071541">
    <property type="term" value="C:eukaryotic translation initiation factor 3 complex, eIF3m"/>
    <property type="evidence" value="ECO:0007669"/>
    <property type="project" value="EnsemblFungi"/>
</dbReference>
<dbReference type="GO" id="GO:0043614">
    <property type="term" value="C:multi-eIF complex"/>
    <property type="evidence" value="ECO:0007669"/>
    <property type="project" value="EnsemblFungi"/>
</dbReference>
<dbReference type="GO" id="GO:0003723">
    <property type="term" value="F:RNA binding"/>
    <property type="evidence" value="ECO:0007669"/>
    <property type="project" value="UniProtKB-UniRule"/>
</dbReference>
<dbReference type="GO" id="GO:0003743">
    <property type="term" value="F:translation initiation factor activity"/>
    <property type="evidence" value="ECO:0007669"/>
    <property type="project" value="UniProtKB-UniRule"/>
</dbReference>
<dbReference type="GO" id="GO:0001732">
    <property type="term" value="P:formation of cytoplasmic translation initiation complex"/>
    <property type="evidence" value="ECO:0007669"/>
    <property type="project" value="UniProtKB-UniRule"/>
</dbReference>
<dbReference type="GO" id="GO:0002188">
    <property type="term" value="P:translation reinitiation"/>
    <property type="evidence" value="ECO:0007669"/>
    <property type="project" value="EnsemblFungi"/>
</dbReference>
<dbReference type="GO" id="GO:0006415">
    <property type="term" value="P:translational termination"/>
    <property type="evidence" value="ECO:0007669"/>
    <property type="project" value="EnsemblFungi"/>
</dbReference>
<dbReference type="CDD" id="cd12933">
    <property type="entry name" value="eIF3G"/>
    <property type="match status" value="1"/>
</dbReference>
<dbReference type="CDD" id="cd12408">
    <property type="entry name" value="RRM_eIF3G_like"/>
    <property type="match status" value="1"/>
</dbReference>
<dbReference type="Gene3D" id="3.30.70.330">
    <property type="match status" value="1"/>
</dbReference>
<dbReference type="HAMAP" id="MF_03006">
    <property type="entry name" value="eIF3g"/>
    <property type="match status" value="1"/>
</dbReference>
<dbReference type="InterPro" id="IPR017334">
    <property type="entry name" value="eIF3_g"/>
</dbReference>
<dbReference type="InterPro" id="IPR024675">
    <property type="entry name" value="eIF3g_N"/>
</dbReference>
<dbReference type="InterPro" id="IPR034240">
    <property type="entry name" value="eIF3G_RRM"/>
</dbReference>
<dbReference type="InterPro" id="IPR012677">
    <property type="entry name" value="Nucleotide-bd_a/b_plait_sf"/>
</dbReference>
<dbReference type="InterPro" id="IPR035979">
    <property type="entry name" value="RBD_domain_sf"/>
</dbReference>
<dbReference type="InterPro" id="IPR000504">
    <property type="entry name" value="RRM_dom"/>
</dbReference>
<dbReference type="PANTHER" id="PTHR10352">
    <property type="entry name" value="EUKARYOTIC TRANSLATION INITIATION FACTOR 3 SUBUNIT G"/>
    <property type="match status" value="1"/>
</dbReference>
<dbReference type="Pfam" id="PF12353">
    <property type="entry name" value="eIF3g"/>
    <property type="match status" value="1"/>
</dbReference>
<dbReference type="Pfam" id="PF00076">
    <property type="entry name" value="RRM_1"/>
    <property type="match status" value="1"/>
</dbReference>
<dbReference type="PIRSF" id="PIRSF037949">
    <property type="entry name" value="Transl_init_eIF-3_RNA-bind"/>
    <property type="match status" value="1"/>
</dbReference>
<dbReference type="SMART" id="SM00360">
    <property type="entry name" value="RRM"/>
    <property type="match status" value="1"/>
</dbReference>
<dbReference type="SUPFAM" id="SSF54928">
    <property type="entry name" value="RNA-binding domain, RBD"/>
    <property type="match status" value="1"/>
</dbReference>
<dbReference type="PROSITE" id="PS50102">
    <property type="entry name" value="RRM"/>
    <property type="match status" value="1"/>
</dbReference>
<feature type="chain" id="PRO_0000366893" description="Eukaryotic translation initiation factor 3 subunit G">
    <location>
        <begin position="1"/>
        <end position="274"/>
    </location>
</feature>
<feature type="domain" description="RRM" evidence="1">
    <location>
        <begin position="191"/>
        <end position="270"/>
    </location>
</feature>
<feature type="region of interest" description="Disordered" evidence="2">
    <location>
        <begin position="149"/>
        <end position="170"/>
    </location>
</feature>
<feature type="modified residue" description="Phosphoserine" evidence="1">
    <location>
        <position position="146"/>
    </location>
</feature>
<feature type="modified residue" description="Phosphoserine" evidence="1">
    <location>
        <position position="164"/>
    </location>
</feature>
<feature type="modified residue" description="Phosphoserine" evidence="1">
    <location>
        <position position="171"/>
    </location>
</feature>